<comment type="function">
    <text>NDH-1 shuttles electrons from NADH, via FMN and iron-sulfur (Fe-S) centers, to quinones in the respiratory chain. The immediate electron acceptor for the enzyme in this species is believed to be ubiquinone. Couples the redox reaction to proton translocation (for every two electrons transferred, four hydrogen ions are translocated across the cytoplasmic membrane), and thus conserves the redox energy in a proton gradient.</text>
</comment>
<comment type="catalytic activity">
    <reaction>
        <text>a quinone + NADH + 5 H(+)(in) = a quinol + NAD(+) + 4 H(+)(out)</text>
        <dbReference type="Rhea" id="RHEA:57888"/>
        <dbReference type="ChEBI" id="CHEBI:15378"/>
        <dbReference type="ChEBI" id="CHEBI:24646"/>
        <dbReference type="ChEBI" id="CHEBI:57540"/>
        <dbReference type="ChEBI" id="CHEBI:57945"/>
        <dbReference type="ChEBI" id="CHEBI:132124"/>
    </reaction>
</comment>
<comment type="cofactor">
    <cofactor evidence="7">
        <name>[2Fe-2S] cluster</name>
        <dbReference type="ChEBI" id="CHEBI:190135"/>
    </cofactor>
    <text evidence="7">Binds 1 [2Fe-2S] cluster per subunit. The [2Fe-2S] cluster is known as N1b.</text>
</comment>
<comment type="cofactor">
    <cofactor evidence="5 7">
        <name>[4Fe-4S] cluster</name>
        <dbReference type="ChEBI" id="CHEBI:49883"/>
    </cofactor>
    <text evidence="5 7">Binds 2 [4Fe-4S] clusters per subunit. The [4Fe-4S] cluster 1 is known as N5 and [4Fe-4S] cluster 3 as N4.</text>
</comment>
<comment type="subunit">
    <text>NDH-1 is composed of at least 14 different subunits, Nqo1 to Nqo14. The complex has a L-shaped structure, with the hydrophobic arm (subunits Nqo7, Nqo8, Nqo10 to Nqo14) embedded in the inner membrane and the hydrophilic peripheral arm (subunits Nqo1 to Nqo6, Nqo9) protruding into the bacterial cytoplasm. The hydrophilic domain contains all the redox centers.</text>
</comment>
<comment type="subcellular location">
    <subcellularLocation>
        <location>Cell inner membrane</location>
        <topology evidence="11">Peripheral membrane protein</topology>
    </subcellularLocation>
</comment>
<comment type="similarity">
    <text evidence="9">Belongs to the complex I 75 kDa subunit family.</text>
</comment>
<name>NQO3_PARDE</name>
<sequence>MADLRKIKIDDTIIEVDPNMTLIQACEMAGIEVPRFCYHERLSIAGNCRMCLVEVVGGPPKPAASCAMQVKDLRPGPEGAPSEIRTNSPMVKKAREGVMEFLLINHPLDCPICDQGGECDLQDQAMAYGVDFSRYREPKRATEDLNLGPLVETHMTRCISCTRCVRFTTEVAGITQMGQTGRGEDSEITSYLNQTLESNMQGNIIDLCPVGALVSKPYAFTARPWELTKTESIDVMDALGSSIRIDTKGREVMRILPRNHDGVNEEWISDKTRFVWDGLRRQRLDRPYIRENGRLRPASWPEALEAAARAMKGKKIAGLIGDLVPAEAAFSLKQLVEGLGGKVECRVDGARLPAGNRSAYVGTARIEDIDDAEMIQLIGTNPRDEAPVLNARIRKAWSKGAKVGLVGEPVDLTYDYAHVGTDRAALESLSSREISDETKARPSIVIVGQGAIARRDGEAVLAHAMKLAENSNSGLLILHTAAGRVGAMDVGAVTEGGLLAAIDGAEVVYNLGADEVDIDQGPFVIYQGSHGDRGAHRDIILPGACYTEESGLFVNTEGRPQLAMRANFAPGEGKENWAILRALSAELGATQPWDSLAGLRRKLVEAVPHLAQIDQVPQNEWQPLGRFDLGQASFRYAIRDFYLTNPIARSSPLMGELSAMAAARKAPAPLAAE</sequence>
<reference key="1">
    <citation type="journal article" date="1992" name="Arch. Biochem. Biophys.">
        <title>Structural features of the 66-kDa subunit of the energy-transducing NADH-ubiquinone oxidoreductase (NDH-1) of Paracoccus denitrificans.</title>
        <authorList>
            <person name="Xu X."/>
            <person name="Matsuno-Yagi A."/>
            <person name="Yagi T."/>
        </authorList>
    </citation>
    <scope>NUCLEOTIDE SEQUENCE [GENOMIC DNA]</scope>
    <scope>PROTEIN SEQUENCE OF 2-16</scope>
    <source>
        <strain>ATCC 13543 / NRRL B-3784 / NRC 449</strain>
    </source>
</reference>
<reference key="2">
    <citation type="journal article" date="1993" name="Biochemistry">
        <title>DNA sequencing of the seven remaining structural genes of the gene cluster encoding the energy-transducing NADH-quinone oxidoreductase of Paracoccus denitrificans.</title>
        <authorList>
            <person name="Xu X."/>
            <person name="Matsuno-Yagi A."/>
            <person name="Yagi T."/>
        </authorList>
    </citation>
    <scope>NUCLEOTIDE SEQUENCE [GENOMIC DNA] OF 658-673</scope>
</reference>
<reference key="3">
    <citation type="journal article" date="1995" name="J. Biol. Chem.">
        <title>Expression and characterization of the 66-kilodalton (NQO3) iron-sulfur subunit of the proton-translocating NADH-quinone oxidoreductase of Paracoccus denitrificans.</title>
        <authorList>
            <person name="Yano T."/>
            <person name="Yagi T."/>
            <person name="Sled' V.D."/>
            <person name="Ohnishi T."/>
        </authorList>
    </citation>
    <scope>IDENTIFICATION OF A [2FE--2S] AND A [4FE--4S] CLUSTER</scope>
    <scope>SUBCELLULAR LOCATION</scope>
</reference>
<reference key="4">
    <citation type="journal article" date="2003" name="J. Biol. Chem.">
        <title>Characterization of cluster N5 as a fast-relaxing [4Fe-4S] cluster in the Nqo3 subunit of the proton-translocating NADH-ubiquinone oxidoreductase from Paracoccus denitrificans.</title>
        <authorList>
            <person name="Yano T."/>
            <person name="Sklar J."/>
            <person name="Nakamaru-Ogiso E."/>
            <person name="Takahashi Y."/>
            <person name="Yagi T."/>
            <person name="Ohnishi T."/>
        </authorList>
    </citation>
    <scope>IDENTIFICATION OF A SECOND [4FE--4S] CLUSTER</scope>
    <scope>MUTAGENESIS OF HIS-106</scope>
</reference>
<dbReference type="EC" id="7.1.1.-"/>
<dbReference type="EMBL" id="M84572">
    <property type="protein sequence ID" value="AAA25587.1"/>
    <property type="molecule type" value="Genomic_DNA"/>
</dbReference>
<dbReference type="PIR" id="S23948">
    <property type="entry name" value="A45456"/>
</dbReference>
<dbReference type="SMR" id="P29915"/>
<dbReference type="TCDB" id="3.D.1.2.1">
    <property type="family name" value="the h+ or na+-translocating nadh dehydrogenase (ndh) family"/>
</dbReference>
<dbReference type="GO" id="GO:0005886">
    <property type="term" value="C:plasma membrane"/>
    <property type="evidence" value="ECO:0007669"/>
    <property type="project" value="UniProtKB-SubCell"/>
</dbReference>
<dbReference type="GO" id="GO:0051537">
    <property type="term" value="F:2 iron, 2 sulfur cluster binding"/>
    <property type="evidence" value="ECO:0007669"/>
    <property type="project" value="UniProtKB-KW"/>
</dbReference>
<dbReference type="GO" id="GO:0051539">
    <property type="term" value="F:4 iron, 4 sulfur cluster binding"/>
    <property type="evidence" value="ECO:0007669"/>
    <property type="project" value="UniProtKB-KW"/>
</dbReference>
<dbReference type="GO" id="GO:0046872">
    <property type="term" value="F:metal ion binding"/>
    <property type="evidence" value="ECO:0007669"/>
    <property type="project" value="UniProtKB-KW"/>
</dbReference>
<dbReference type="GO" id="GO:0008137">
    <property type="term" value="F:NADH dehydrogenase (ubiquinone) activity"/>
    <property type="evidence" value="ECO:0007669"/>
    <property type="project" value="InterPro"/>
</dbReference>
<dbReference type="GO" id="GO:0048038">
    <property type="term" value="F:quinone binding"/>
    <property type="evidence" value="ECO:0007669"/>
    <property type="project" value="UniProtKB-KW"/>
</dbReference>
<dbReference type="GO" id="GO:0042773">
    <property type="term" value="P:ATP synthesis coupled electron transport"/>
    <property type="evidence" value="ECO:0007669"/>
    <property type="project" value="InterPro"/>
</dbReference>
<dbReference type="CDD" id="cd00207">
    <property type="entry name" value="fer2"/>
    <property type="match status" value="1"/>
</dbReference>
<dbReference type="CDD" id="cd02773">
    <property type="entry name" value="MopB_Res-Cmplx1_Nad11"/>
    <property type="match status" value="1"/>
</dbReference>
<dbReference type="FunFam" id="3.10.20.740:FF:000001">
    <property type="entry name" value="NADH-quinone oxidoreductase subunit G"/>
    <property type="match status" value="1"/>
</dbReference>
<dbReference type="FunFam" id="3.30.200.210:FF:000002">
    <property type="entry name" value="NADH-ubiquinone oxidoreductase 75 kDa subunit"/>
    <property type="match status" value="1"/>
</dbReference>
<dbReference type="FunFam" id="3.30.70.20:FF:000002">
    <property type="entry name" value="NADH-ubiquinone oxidoreductase 75 kDa subunit"/>
    <property type="match status" value="1"/>
</dbReference>
<dbReference type="Gene3D" id="3.10.20.740">
    <property type="match status" value="1"/>
</dbReference>
<dbReference type="Gene3D" id="3.30.200.210">
    <property type="match status" value="1"/>
</dbReference>
<dbReference type="Gene3D" id="3.30.70.20">
    <property type="match status" value="1"/>
</dbReference>
<dbReference type="Gene3D" id="3.40.50.740">
    <property type="match status" value="1"/>
</dbReference>
<dbReference type="InterPro" id="IPR036010">
    <property type="entry name" value="2Fe-2S_ferredoxin-like_sf"/>
</dbReference>
<dbReference type="InterPro" id="IPR001041">
    <property type="entry name" value="2Fe-2S_ferredoxin-type"/>
</dbReference>
<dbReference type="InterPro" id="IPR006656">
    <property type="entry name" value="Mopterin_OxRdtase"/>
</dbReference>
<dbReference type="InterPro" id="IPR006963">
    <property type="entry name" value="Mopterin_OxRdtase_4Fe-4S_dom"/>
</dbReference>
<dbReference type="InterPro" id="IPR000283">
    <property type="entry name" value="NADH_UbQ_OxRdtase_75kDa_su_CS"/>
</dbReference>
<dbReference type="InterPro" id="IPR054351">
    <property type="entry name" value="NADH_UbQ_OxRdtase_ferredoxin"/>
</dbReference>
<dbReference type="InterPro" id="IPR010228">
    <property type="entry name" value="NADH_UbQ_OxRdtase_Gsu"/>
</dbReference>
<dbReference type="InterPro" id="IPR019574">
    <property type="entry name" value="NADH_UbQ_OxRdtase_Gsu_4Fe4S-bd"/>
</dbReference>
<dbReference type="InterPro" id="IPR015405">
    <property type="entry name" value="NDUFS1-like_C"/>
</dbReference>
<dbReference type="InterPro" id="IPR050123">
    <property type="entry name" value="Prok_molybdopt-oxidoreductase"/>
</dbReference>
<dbReference type="NCBIfam" id="TIGR01973">
    <property type="entry name" value="NuoG"/>
    <property type="match status" value="1"/>
</dbReference>
<dbReference type="PANTHER" id="PTHR43105:SF13">
    <property type="entry name" value="NADH-UBIQUINONE OXIDOREDUCTASE 75 KDA SUBUNIT, MITOCHONDRIAL"/>
    <property type="match status" value="1"/>
</dbReference>
<dbReference type="PANTHER" id="PTHR43105">
    <property type="entry name" value="RESPIRATORY NITRATE REDUCTASE"/>
    <property type="match status" value="1"/>
</dbReference>
<dbReference type="Pfam" id="PF13510">
    <property type="entry name" value="Fer2_4"/>
    <property type="match status" value="1"/>
</dbReference>
<dbReference type="Pfam" id="PF22151">
    <property type="entry name" value="Fer4_NDSU1"/>
    <property type="match status" value="1"/>
</dbReference>
<dbReference type="Pfam" id="PF22117">
    <property type="entry name" value="Fer4_Nqo3"/>
    <property type="match status" value="1"/>
</dbReference>
<dbReference type="Pfam" id="PF00384">
    <property type="entry name" value="Molybdopterin"/>
    <property type="match status" value="1"/>
</dbReference>
<dbReference type="Pfam" id="PF10588">
    <property type="entry name" value="NADH-G_4Fe-4S_3"/>
    <property type="match status" value="1"/>
</dbReference>
<dbReference type="Pfam" id="PF09326">
    <property type="entry name" value="NADH_dhqG_C"/>
    <property type="match status" value="1"/>
</dbReference>
<dbReference type="SMART" id="SM00929">
    <property type="entry name" value="NADH-G_4Fe-4S_3"/>
    <property type="match status" value="1"/>
</dbReference>
<dbReference type="SUPFAM" id="SSF54292">
    <property type="entry name" value="2Fe-2S ferredoxin-like"/>
    <property type="match status" value="1"/>
</dbReference>
<dbReference type="SUPFAM" id="SSF54862">
    <property type="entry name" value="4Fe-4S ferredoxins"/>
    <property type="match status" value="1"/>
</dbReference>
<dbReference type="SUPFAM" id="SSF53706">
    <property type="entry name" value="Formate dehydrogenase/DMSO reductase, domains 1-3"/>
    <property type="match status" value="1"/>
</dbReference>
<dbReference type="PROSITE" id="PS51085">
    <property type="entry name" value="2FE2S_FER_2"/>
    <property type="match status" value="1"/>
</dbReference>
<dbReference type="PROSITE" id="PS51839">
    <property type="entry name" value="4FE4S_HC3"/>
    <property type="match status" value="1"/>
</dbReference>
<dbReference type="PROSITE" id="PS51669">
    <property type="entry name" value="4FE4S_MOW_BIS_MGD"/>
    <property type="match status" value="1"/>
</dbReference>
<dbReference type="PROSITE" id="PS00641">
    <property type="entry name" value="COMPLEX1_75K_1"/>
    <property type="match status" value="1"/>
</dbReference>
<dbReference type="PROSITE" id="PS00642">
    <property type="entry name" value="COMPLEX1_75K_2"/>
    <property type="match status" value="1"/>
</dbReference>
<dbReference type="PROSITE" id="PS00643">
    <property type="entry name" value="COMPLEX1_75K_3"/>
    <property type="match status" value="1"/>
</dbReference>
<keyword id="KW-0001">2Fe-2S</keyword>
<keyword id="KW-0004">4Fe-4S</keyword>
<keyword id="KW-0997">Cell inner membrane</keyword>
<keyword id="KW-1003">Cell membrane</keyword>
<keyword id="KW-0903">Direct protein sequencing</keyword>
<keyword id="KW-0408">Iron</keyword>
<keyword id="KW-0411">Iron-sulfur</keyword>
<keyword id="KW-0472">Membrane</keyword>
<keyword id="KW-0479">Metal-binding</keyword>
<keyword id="KW-0520">NAD</keyword>
<keyword id="KW-0874">Quinone</keyword>
<keyword id="KW-1278">Translocase</keyword>
<keyword id="KW-0830">Ubiquinone</keyword>
<organism>
    <name type="scientific">Paracoccus denitrificans</name>
    <dbReference type="NCBI Taxonomy" id="266"/>
    <lineage>
        <taxon>Bacteria</taxon>
        <taxon>Pseudomonadati</taxon>
        <taxon>Pseudomonadota</taxon>
        <taxon>Alphaproteobacteria</taxon>
        <taxon>Rhodobacterales</taxon>
        <taxon>Paracoccaceae</taxon>
        <taxon>Paracoccus</taxon>
    </lineage>
</organism>
<proteinExistence type="evidence at protein level"/>
<feature type="initiator methionine" description="Removed" evidence="6">
    <location>
        <position position="1"/>
    </location>
</feature>
<feature type="chain" id="PRO_0000118540" description="NADH-quinone oxidoreductase chain 3">
    <location>
        <begin position="2"/>
        <end position="673"/>
    </location>
</feature>
<feature type="domain" description="2Fe-2S ferredoxin-type" evidence="2">
    <location>
        <begin position="5"/>
        <end position="90"/>
    </location>
</feature>
<feature type="domain" description="4Fe-4S His(Cys)3-ligated-type" evidence="4">
    <location>
        <begin position="90"/>
        <end position="129"/>
    </location>
</feature>
<feature type="domain" description="4Fe-4S Mo/W bis-MGD-type" evidence="3">
    <location>
        <begin position="227"/>
        <end position="283"/>
    </location>
</feature>
<feature type="binding site" evidence="1">
    <location>
        <position position="37"/>
    </location>
    <ligand>
        <name>[2Fe-2S] cluster</name>
        <dbReference type="ChEBI" id="CHEBI:190135"/>
    </ligand>
</feature>
<feature type="binding site" evidence="1">
    <location>
        <position position="48"/>
    </location>
    <ligand>
        <name>[2Fe-2S] cluster</name>
        <dbReference type="ChEBI" id="CHEBI:190135"/>
    </ligand>
</feature>
<feature type="binding site" evidence="1">
    <location>
        <position position="51"/>
    </location>
    <ligand>
        <name>[2Fe-2S] cluster</name>
        <dbReference type="ChEBI" id="CHEBI:190135"/>
    </ligand>
</feature>
<feature type="binding site" evidence="1">
    <location>
        <position position="66"/>
    </location>
    <ligand>
        <name>[2Fe-2S] cluster</name>
        <dbReference type="ChEBI" id="CHEBI:190135"/>
    </ligand>
</feature>
<feature type="binding site" evidence="4 10">
    <location>
        <position position="106"/>
    </location>
    <ligand>
        <name>[4Fe-4S] cluster</name>
        <dbReference type="ChEBI" id="CHEBI:49883"/>
        <label>1</label>
    </ligand>
</feature>
<feature type="binding site" evidence="4">
    <location>
        <position position="110"/>
    </location>
    <ligand>
        <name>[4Fe-4S] cluster</name>
        <dbReference type="ChEBI" id="CHEBI:49883"/>
        <label>1</label>
    </ligand>
</feature>
<feature type="binding site" evidence="4">
    <location>
        <position position="113"/>
    </location>
    <ligand>
        <name>[4Fe-4S] cluster</name>
        <dbReference type="ChEBI" id="CHEBI:49883"/>
        <label>1</label>
    </ligand>
</feature>
<feature type="binding site" evidence="4">
    <location>
        <position position="119"/>
    </location>
    <ligand>
        <name>[4Fe-4S] cluster</name>
        <dbReference type="ChEBI" id="CHEBI:49883"/>
        <label>1</label>
    </ligand>
</feature>
<feature type="binding site" evidence="1">
    <location>
        <position position="158"/>
    </location>
    <ligand>
        <name>[4Fe-4S] cluster</name>
        <dbReference type="ChEBI" id="CHEBI:49883"/>
        <label>2</label>
    </ligand>
</feature>
<feature type="binding site" evidence="1">
    <location>
        <position position="161"/>
    </location>
    <ligand>
        <name>[4Fe-4S] cluster</name>
        <dbReference type="ChEBI" id="CHEBI:49883"/>
        <label>2</label>
    </ligand>
</feature>
<feature type="binding site" evidence="1">
    <location>
        <position position="164"/>
    </location>
    <ligand>
        <name>[4Fe-4S] cluster</name>
        <dbReference type="ChEBI" id="CHEBI:49883"/>
        <label>2</label>
    </ligand>
</feature>
<feature type="binding site" evidence="1">
    <location>
        <position position="208"/>
    </location>
    <ligand>
        <name>[4Fe-4S] cluster</name>
        <dbReference type="ChEBI" id="CHEBI:49883"/>
        <label>2</label>
    </ligand>
</feature>
<feature type="mutagenesis site" description="Very little incorporation of iron-sulfur centers into protein in E.coli." evidence="5">
    <original>H</original>
    <variation>A</variation>
    <location>
        <position position="106"/>
    </location>
</feature>
<feature type="mutagenesis site" description="Alters the EPR signal of the N5 cluster; all 3 iron-sulfur clusters are less stable in E.coli." evidence="5">
    <original>H</original>
    <variation>C</variation>
    <location>
        <position position="106"/>
    </location>
</feature>
<protein>
    <recommendedName>
        <fullName>NADH-quinone oxidoreductase chain 3</fullName>
        <ecNumber>7.1.1.-</ecNumber>
    </recommendedName>
    <alternativeName>
        <fullName>NADH dehydrogenase I, chain 3</fullName>
    </alternativeName>
    <alternativeName>
        <fullName>NDH-1, chain 3</fullName>
    </alternativeName>
</protein>
<accession>P29915</accession>
<gene>
    <name evidence="8" type="primary">nqo3</name>
</gene>
<evidence type="ECO:0000255" key="1"/>
<evidence type="ECO:0000255" key="2">
    <source>
        <dbReference type="PROSITE-ProRule" id="PRU00465"/>
    </source>
</evidence>
<evidence type="ECO:0000255" key="3">
    <source>
        <dbReference type="PROSITE-ProRule" id="PRU01004"/>
    </source>
</evidence>
<evidence type="ECO:0000255" key="4">
    <source>
        <dbReference type="PROSITE-ProRule" id="PRU01184"/>
    </source>
</evidence>
<evidence type="ECO:0000269" key="5">
    <source>
    </source>
</evidence>
<evidence type="ECO:0000269" key="6">
    <source>
    </source>
</evidence>
<evidence type="ECO:0000269" key="7">
    <source>
    </source>
</evidence>
<evidence type="ECO:0000303" key="8">
    <source>
    </source>
</evidence>
<evidence type="ECO:0000305" key="9"/>
<evidence type="ECO:0000305" key="10">
    <source>
    </source>
</evidence>
<evidence type="ECO:0000305" key="11">
    <source>
    </source>
</evidence>